<comment type="function">
    <text evidence="1 3 4">Transcriptional coactivator; part of the gene cluster that mediates the biosynthesis of geodin, an intermediate in the biosynthesis of other natural products (PubMed:12536215, PubMed:24009710). With gedR, coregulates the production of geodin (By similarity).</text>
</comment>
<comment type="subcellular location">
    <subcellularLocation>
        <location evidence="6">Nucleus</location>
    </subcellularLocation>
</comment>
<accession>Q0CCY2</accession>
<dbReference type="EMBL" id="CH476605">
    <property type="protein sequence ID" value="EAU31625.1"/>
    <property type="molecule type" value="Genomic_DNA"/>
</dbReference>
<dbReference type="RefSeq" id="XP_001217073.1">
    <property type="nucleotide sequence ID" value="XM_001217073.1"/>
</dbReference>
<dbReference type="SMR" id="Q0CCY2"/>
<dbReference type="STRING" id="341663.Q0CCY2"/>
<dbReference type="EnsemblFungi" id="EAU31625">
    <property type="protein sequence ID" value="EAU31625"/>
    <property type="gene ID" value="ATEG_08452"/>
</dbReference>
<dbReference type="GeneID" id="4353102"/>
<dbReference type="VEuPathDB" id="FungiDB:ATEG_08452"/>
<dbReference type="eggNOG" id="KOG3178">
    <property type="taxonomic scope" value="Eukaryota"/>
</dbReference>
<dbReference type="HOGENOM" id="CLU_005533_11_0_1"/>
<dbReference type="OMA" id="CSNELAT"/>
<dbReference type="OrthoDB" id="1606438at2759"/>
<dbReference type="Proteomes" id="UP000007963">
    <property type="component" value="Unassembled WGS sequence"/>
</dbReference>
<dbReference type="GO" id="GO:0005634">
    <property type="term" value="C:nucleus"/>
    <property type="evidence" value="ECO:0007669"/>
    <property type="project" value="UniProtKB-SubCell"/>
</dbReference>
<dbReference type="GO" id="GO:0003677">
    <property type="term" value="F:DNA binding"/>
    <property type="evidence" value="ECO:0007669"/>
    <property type="project" value="UniProtKB-KW"/>
</dbReference>
<dbReference type="Gene3D" id="3.40.50.150">
    <property type="entry name" value="Vaccinia Virus protein VP39"/>
    <property type="match status" value="1"/>
</dbReference>
<dbReference type="Gene3D" id="1.10.10.10">
    <property type="entry name" value="Winged helix-like DNA-binding domain superfamily/Winged helix DNA-binding domain"/>
    <property type="match status" value="1"/>
</dbReference>
<dbReference type="InterPro" id="IPR029063">
    <property type="entry name" value="SAM-dependent_MTases_sf"/>
</dbReference>
<dbReference type="InterPro" id="IPR036388">
    <property type="entry name" value="WH-like_DNA-bd_sf"/>
</dbReference>
<dbReference type="InterPro" id="IPR036390">
    <property type="entry name" value="WH_DNA-bd_sf"/>
</dbReference>
<dbReference type="PANTHER" id="PTHR43712:SF15">
    <property type="entry name" value="MONODICTYPHENONE CLUSTER TRANSCRIPTIONAL COACTIVATOR MDPA"/>
    <property type="match status" value="1"/>
</dbReference>
<dbReference type="PANTHER" id="PTHR43712">
    <property type="entry name" value="PUTATIVE (AFU_ORTHOLOGUE AFUA_4G14580)-RELATED"/>
    <property type="match status" value="1"/>
</dbReference>
<dbReference type="SUPFAM" id="SSF46785">
    <property type="entry name" value="Winged helix' DNA-binding domain"/>
    <property type="match status" value="1"/>
</dbReference>
<gene>
    <name type="primary">gedD</name>
    <name type="ORF">ATEG_08452</name>
</gene>
<reference key="1">
    <citation type="submission" date="2005-09" db="EMBL/GenBank/DDBJ databases">
        <title>Annotation of the Aspergillus terreus NIH2624 genome.</title>
        <authorList>
            <person name="Birren B.W."/>
            <person name="Lander E.S."/>
            <person name="Galagan J.E."/>
            <person name="Nusbaum C."/>
            <person name="Devon K."/>
            <person name="Henn M."/>
            <person name="Ma L.-J."/>
            <person name="Jaffe D.B."/>
            <person name="Butler J."/>
            <person name="Alvarez P."/>
            <person name="Gnerre S."/>
            <person name="Grabherr M."/>
            <person name="Kleber M."/>
            <person name="Mauceli E.W."/>
            <person name="Brockman W."/>
            <person name="Rounsley S."/>
            <person name="Young S.K."/>
            <person name="LaButti K."/>
            <person name="Pushparaj V."/>
            <person name="DeCaprio D."/>
            <person name="Crawford M."/>
            <person name="Koehrsen M."/>
            <person name="Engels R."/>
            <person name="Montgomery P."/>
            <person name="Pearson M."/>
            <person name="Howarth C."/>
            <person name="Larson L."/>
            <person name="Luoma S."/>
            <person name="White J."/>
            <person name="Alvarado L."/>
            <person name="Kodira C.D."/>
            <person name="Zeng Q."/>
            <person name="Oleary S."/>
            <person name="Yandava C."/>
            <person name="Denning D.W."/>
            <person name="Nierman W.C."/>
            <person name="Milne T."/>
            <person name="Madden K."/>
        </authorList>
    </citation>
    <scope>NUCLEOTIDE SEQUENCE [LARGE SCALE GENOMIC DNA]</scope>
    <source>
        <strain>NIH 2624 / FGSC A1156</strain>
    </source>
</reference>
<reference key="2">
    <citation type="journal article" date="2003" name="Nat. Biotechnol.">
        <title>Integrating transcriptional and metabolite profiles to direct the engineering of lovastatin-producing fungal strains.</title>
        <authorList>
            <person name="Askenazi M."/>
            <person name="Driggers E.M."/>
            <person name="Holtzman D.A."/>
            <person name="Norman T.C."/>
            <person name="Iverson S."/>
            <person name="Zimmer D.P."/>
            <person name="Boers M.E."/>
            <person name="Blomquist P.R."/>
            <person name="Martinez E.J."/>
            <person name="Monreal A.W."/>
            <person name="Feibelman T.P."/>
            <person name="Mayorga M.E."/>
            <person name="Maxon M.E."/>
            <person name="Sykes K."/>
            <person name="Tobin J.V."/>
            <person name="Cordero E."/>
            <person name="Salama S.R."/>
            <person name="Trueheart J."/>
            <person name="Royer J.C."/>
            <person name="Madden K.T."/>
        </authorList>
    </citation>
    <scope>FUNCTION</scope>
</reference>
<reference key="3">
    <citation type="journal article" date="2013" name="PLoS ONE">
        <title>Heterologous reconstitution of the intact geodin gene cluster in Aspergillus nidulans through a simple and versatile PCR based approach.</title>
        <authorList>
            <person name="Nielsen M.T."/>
            <person name="Nielsen J.B."/>
            <person name="Anyaogu D.C."/>
            <person name="Holm D.K."/>
            <person name="Nielsen K.F."/>
            <person name="Larsen T.O."/>
            <person name="Mortensen U.H."/>
        </authorList>
    </citation>
    <scope>FUNCTION</scope>
</reference>
<organism>
    <name type="scientific">Aspergillus terreus (strain NIH 2624 / FGSC A1156)</name>
    <dbReference type="NCBI Taxonomy" id="341663"/>
    <lineage>
        <taxon>Eukaryota</taxon>
        <taxon>Fungi</taxon>
        <taxon>Dikarya</taxon>
        <taxon>Ascomycota</taxon>
        <taxon>Pezizomycotina</taxon>
        <taxon>Eurotiomycetes</taxon>
        <taxon>Eurotiomycetidae</taxon>
        <taxon>Eurotiales</taxon>
        <taxon>Aspergillaceae</taxon>
        <taxon>Aspergillus</taxon>
        <taxon>Aspergillus subgen. Circumdati</taxon>
    </lineage>
</organism>
<sequence>MLLCDSLSFFQQLAWHVQLLACLQWLGRSQVLICLPLGSSFSVRDLAQLCGVSETTLSRVVRLTATAGFLQEPQPGQIMHTPLSGAFGGQPSLRDATLFLSNRITPSALQMASTLHLGRTESAAESAYNLAFATSRTFRDACRVTPKLHRQWIAYLRNTGDSDDSITEVLTRLDWAHLGRSCIVESGARSTTRARVLSKLYPALRFVVQLSGPDQDAHDTRASLTPVPSIPGIIQLDENYPHISVQTRNLGLAQPVLDAAVYILHLPSLSVANSPSRSIVVKELQAHMDVLSSNPSAVLIATARVLPPPGSVHREVEAMCRVRDFTLMQLTNEHEPEVADFDDLVNAVEAGGAGRLVVADKLRARNNLLVAFVLKYQEVSAPGALPSSF</sequence>
<proteinExistence type="inferred from homology"/>
<name>GEDD_ASPTN</name>
<feature type="chain" id="PRO_5004170008" description="Geodin cluster transcriptional coactivator gedD">
    <location>
        <begin position="1"/>
        <end position="389"/>
    </location>
</feature>
<feature type="domain" description="HTH iclR-type" evidence="2">
    <location>
        <begin position="13"/>
        <end position="83"/>
    </location>
</feature>
<feature type="DNA-binding region" description="H-T-H motif" evidence="2">
    <location>
        <begin position="43"/>
        <end position="62"/>
    </location>
</feature>
<evidence type="ECO:0000250" key="1">
    <source>
        <dbReference type="UniProtKB" id="Q4WQZ4"/>
    </source>
</evidence>
<evidence type="ECO:0000255" key="2">
    <source>
        <dbReference type="PROSITE-ProRule" id="PRU00393"/>
    </source>
</evidence>
<evidence type="ECO:0000269" key="3">
    <source>
    </source>
</evidence>
<evidence type="ECO:0000269" key="4">
    <source>
    </source>
</evidence>
<evidence type="ECO:0000303" key="5">
    <source>
    </source>
</evidence>
<evidence type="ECO:0000305" key="6"/>
<keyword id="KW-0238">DNA-binding</keyword>
<keyword id="KW-0539">Nucleus</keyword>
<keyword id="KW-1185">Reference proteome</keyword>
<keyword id="KW-0804">Transcription</keyword>
<keyword id="KW-0805">Transcription regulation</keyword>
<protein>
    <recommendedName>
        <fullName evidence="5">Geodin cluster transcriptional coactivator gedD</fullName>
    </recommendedName>
    <alternativeName>
        <fullName evidence="5">Geodin synthesis protein D</fullName>
    </alternativeName>
</protein>